<evidence type="ECO:0000255" key="1">
    <source>
        <dbReference type="HAMAP-Rule" id="MF_01703"/>
    </source>
</evidence>
<accession>Q0HTS8</accession>
<name>MSBA_SHESR</name>
<proteinExistence type="inferred from homology"/>
<gene>
    <name evidence="1" type="primary">msbA</name>
    <name type="ordered locus">Shewmr7_2492</name>
</gene>
<reference key="1">
    <citation type="submission" date="2006-08" db="EMBL/GenBank/DDBJ databases">
        <title>Complete sequence of chromosome 1 of Shewanella sp. MR-7.</title>
        <authorList>
            <person name="Copeland A."/>
            <person name="Lucas S."/>
            <person name="Lapidus A."/>
            <person name="Barry K."/>
            <person name="Detter J.C."/>
            <person name="Glavina del Rio T."/>
            <person name="Hammon N."/>
            <person name="Israni S."/>
            <person name="Dalin E."/>
            <person name="Tice H."/>
            <person name="Pitluck S."/>
            <person name="Kiss H."/>
            <person name="Brettin T."/>
            <person name="Bruce D."/>
            <person name="Han C."/>
            <person name="Tapia R."/>
            <person name="Gilna P."/>
            <person name="Schmutz J."/>
            <person name="Larimer F."/>
            <person name="Land M."/>
            <person name="Hauser L."/>
            <person name="Kyrpides N."/>
            <person name="Mikhailova N."/>
            <person name="Nealson K."/>
            <person name="Konstantinidis K."/>
            <person name="Klappenbach J."/>
            <person name="Tiedje J."/>
            <person name="Richardson P."/>
        </authorList>
    </citation>
    <scope>NUCLEOTIDE SEQUENCE [LARGE SCALE GENOMIC DNA]</scope>
    <source>
        <strain>MR-7</strain>
    </source>
</reference>
<dbReference type="EC" id="7.5.2.6" evidence="1"/>
<dbReference type="EMBL" id="CP000444">
    <property type="protein sequence ID" value="ABI43477.1"/>
    <property type="molecule type" value="Genomic_DNA"/>
</dbReference>
<dbReference type="SMR" id="Q0HTS8"/>
<dbReference type="KEGG" id="shm:Shewmr7_2492"/>
<dbReference type="HOGENOM" id="CLU_000604_84_4_6"/>
<dbReference type="GO" id="GO:0005886">
    <property type="term" value="C:plasma membrane"/>
    <property type="evidence" value="ECO:0007669"/>
    <property type="project" value="UniProtKB-SubCell"/>
</dbReference>
<dbReference type="GO" id="GO:0015421">
    <property type="term" value="F:ABC-type oligopeptide transporter activity"/>
    <property type="evidence" value="ECO:0007669"/>
    <property type="project" value="TreeGrafter"/>
</dbReference>
<dbReference type="GO" id="GO:0005524">
    <property type="term" value="F:ATP binding"/>
    <property type="evidence" value="ECO:0007669"/>
    <property type="project" value="UniProtKB-KW"/>
</dbReference>
<dbReference type="GO" id="GO:0016887">
    <property type="term" value="F:ATP hydrolysis activity"/>
    <property type="evidence" value="ECO:0007669"/>
    <property type="project" value="InterPro"/>
</dbReference>
<dbReference type="GO" id="GO:0034040">
    <property type="term" value="F:ATPase-coupled lipid transmembrane transporter activity"/>
    <property type="evidence" value="ECO:0007669"/>
    <property type="project" value="InterPro"/>
</dbReference>
<dbReference type="CDD" id="cd18552">
    <property type="entry name" value="ABC_6TM_MsbA_like"/>
    <property type="match status" value="1"/>
</dbReference>
<dbReference type="FunFam" id="1.20.1560.10:FF:000391">
    <property type="entry name" value="Lipid A export ATP-binding/permease protein MsbA"/>
    <property type="match status" value="1"/>
</dbReference>
<dbReference type="FunFam" id="3.40.50.300:FF:000140">
    <property type="entry name" value="Lipid A export ATP-binding/permease protein MsbA"/>
    <property type="match status" value="1"/>
</dbReference>
<dbReference type="Gene3D" id="1.20.1560.10">
    <property type="entry name" value="ABC transporter type 1, transmembrane domain"/>
    <property type="match status" value="1"/>
</dbReference>
<dbReference type="Gene3D" id="3.40.50.300">
    <property type="entry name" value="P-loop containing nucleotide triphosphate hydrolases"/>
    <property type="match status" value="1"/>
</dbReference>
<dbReference type="InterPro" id="IPR003593">
    <property type="entry name" value="AAA+_ATPase"/>
</dbReference>
<dbReference type="InterPro" id="IPR011527">
    <property type="entry name" value="ABC1_TM_dom"/>
</dbReference>
<dbReference type="InterPro" id="IPR036640">
    <property type="entry name" value="ABC1_TM_sf"/>
</dbReference>
<dbReference type="InterPro" id="IPR003439">
    <property type="entry name" value="ABC_transporter-like_ATP-bd"/>
</dbReference>
<dbReference type="InterPro" id="IPR017871">
    <property type="entry name" value="ABC_transporter-like_CS"/>
</dbReference>
<dbReference type="InterPro" id="IPR011917">
    <property type="entry name" value="ABC_transpr_lipidA"/>
</dbReference>
<dbReference type="InterPro" id="IPR027417">
    <property type="entry name" value="P-loop_NTPase"/>
</dbReference>
<dbReference type="InterPro" id="IPR039421">
    <property type="entry name" value="Type_1_exporter"/>
</dbReference>
<dbReference type="NCBIfam" id="TIGR02203">
    <property type="entry name" value="MsbA_lipidA"/>
    <property type="match status" value="1"/>
</dbReference>
<dbReference type="PANTHER" id="PTHR43394:SF1">
    <property type="entry name" value="ATP-BINDING CASSETTE SUB-FAMILY B MEMBER 10, MITOCHONDRIAL"/>
    <property type="match status" value="1"/>
</dbReference>
<dbReference type="PANTHER" id="PTHR43394">
    <property type="entry name" value="ATP-DEPENDENT PERMEASE MDL1, MITOCHONDRIAL"/>
    <property type="match status" value="1"/>
</dbReference>
<dbReference type="Pfam" id="PF00664">
    <property type="entry name" value="ABC_membrane"/>
    <property type="match status" value="1"/>
</dbReference>
<dbReference type="Pfam" id="PF00005">
    <property type="entry name" value="ABC_tran"/>
    <property type="match status" value="1"/>
</dbReference>
<dbReference type="SMART" id="SM00382">
    <property type="entry name" value="AAA"/>
    <property type="match status" value="1"/>
</dbReference>
<dbReference type="SUPFAM" id="SSF90123">
    <property type="entry name" value="ABC transporter transmembrane region"/>
    <property type="match status" value="1"/>
</dbReference>
<dbReference type="SUPFAM" id="SSF52540">
    <property type="entry name" value="P-loop containing nucleoside triphosphate hydrolases"/>
    <property type="match status" value="1"/>
</dbReference>
<dbReference type="PROSITE" id="PS50929">
    <property type="entry name" value="ABC_TM1F"/>
    <property type="match status" value="1"/>
</dbReference>
<dbReference type="PROSITE" id="PS00211">
    <property type="entry name" value="ABC_TRANSPORTER_1"/>
    <property type="match status" value="1"/>
</dbReference>
<dbReference type="PROSITE" id="PS50893">
    <property type="entry name" value="ABC_TRANSPORTER_2"/>
    <property type="match status" value="1"/>
</dbReference>
<dbReference type="PROSITE" id="PS51239">
    <property type="entry name" value="MSBA"/>
    <property type="match status" value="1"/>
</dbReference>
<organism>
    <name type="scientific">Shewanella sp. (strain MR-7)</name>
    <dbReference type="NCBI Taxonomy" id="60481"/>
    <lineage>
        <taxon>Bacteria</taxon>
        <taxon>Pseudomonadati</taxon>
        <taxon>Pseudomonadota</taxon>
        <taxon>Gammaproteobacteria</taxon>
        <taxon>Alteromonadales</taxon>
        <taxon>Shewanellaceae</taxon>
        <taxon>Shewanella</taxon>
    </lineage>
</organism>
<feature type="chain" id="PRO_0000271655" description="ATP-dependent lipid A-core flippase">
    <location>
        <begin position="1"/>
        <end position="601"/>
    </location>
</feature>
<feature type="transmembrane region" description="Helical" evidence="1">
    <location>
        <begin position="32"/>
        <end position="52"/>
    </location>
</feature>
<feature type="transmembrane region" description="Helical" evidence="1">
    <location>
        <begin position="81"/>
        <end position="101"/>
    </location>
</feature>
<feature type="transmembrane region" description="Helical" evidence="1">
    <location>
        <begin position="160"/>
        <end position="180"/>
    </location>
</feature>
<feature type="transmembrane region" description="Helical" evidence="1">
    <location>
        <begin position="183"/>
        <end position="203"/>
    </location>
</feature>
<feature type="transmembrane region" description="Helical" evidence="1">
    <location>
        <begin position="267"/>
        <end position="287"/>
    </location>
</feature>
<feature type="transmembrane region" description="Helical" evidence="1">
    <location>
        <begin position="296"/>
        <end position="316"/>
    </location>
</feature>
<feature type="domain" description="ABC transmembrane type-1" evidence="1">
    <location>
        <begin position="28"/>
        <end position="328"/>
    </location>
</feature>
<feature type="domain" description="ABC transporter" evidence="1">
    <location>
        <begin position="360"/>
        <end position="597"/>
    </location>
</feature>
<feature type="binding site" evidence="1">
    <location>
        <begin position="394"/>
        <end position="401"/>
    </location>
    <ligand>
        <name>ATP</name>
        <dbReference type="ChEBI" id="CHEBI:30616"/>
    </ligand>
</feature>
<comment type="function">
    <text evidence="1">Involved in lipopolysaccharide (LPS) biosynthesis. Translocates lipid A-core from the inner to the outer leaflet of the inner membrane. Transmembrane domains (TMD) form a pore in the inner membrane and the ATP-binding domain (NBD) is responsible for energy generation.</text>
</comment>
<comment type="catalytic activity">
    <reaction evidence="1">
        <text>ATP + H2O + lipid A-core oligosaccharideSide 1 = ADP + phosphate + lipid A-core oligosaccharideSide 2.</text>
        <dbReference type="EC" id="7.5.2.6"/>
    </reaction>
</comment>
<comment type="subunit">
    <text evidence="1">Homodimer.</text>
</comment>
<comment type="subcellular location">
    <subcellularLocation>
        <location evidence="1">Cell inner membrane</location>
        <topology evidence="1">Multi-pass membrane protein</topology>
    </subcellularLocation>
</comment>
<comment type="domain">
    <text evidence="1">In MsbA the ATP-binding domain (NBD) and the transmembrane domain (TMD) are fused.</text>
</comment>
<comment type="similarity">
    <text evidence="1">Belongs to the ABC transporter superfamily. Lipid exporter (TC 3.A.1.106) family.</text>
</comment>
<keyword id="KW-0067">ATP-binding</keyword>
<keyword id="KW-0997">Cell inner membrane</keyword>
<keyword id="KW-1003">Cell membrane</keyword>
<keyword id="KW-0445">Lipid transport</keyword>
<keyword id="KW-0472">Membrane</keyword>
<keyword id="KW-0547">Nucleotide-binding</keyword>
<keyword id="KW-1278">Translocase</keyword>
<keyword id="KW-0812">Transmembrane</keyword>
<keyword id="KW-1133">Transmembrane helix</keyword>
<keyword id="KW-0813">Transport</keyword>
<sequence length="601" mass="65770">MTASPKDEMWTVFKRLLGYLKPMKGMFLLSVCGLIVYGLVDAAFISFIGPFIDKGFSSSTPAISNGIALPTSQGFHADNQVLLMAPIVVILMFSLRGFANFVSTYGISYMSARLIMDMRQQVFEHYLSLPVSYMDKENTGNLISKVTFDTEQIARASGSALISIVRDGVTVIGMLGLMFYNSWKLSLCILVIGPIMGLVITIVSRRFRKVSKQIQTAMGDVSAATEQMIKGHKNVLAFGGQETETARFAKINDRNRHQNMKLAVAQAVSQPLIMVIGSFALAFVLYAASLDSMKADLTAGTFATILGAMMAMLQPIKNLTRVNAEFQRGIAACTTVFELLDTLPESDTGTYTVKRAKGNLRFDNVSFSYEGQERRALDKIDFEVTQGQTLALVGRSGSGKSTIASLVTRFYTGLESGDIKLDDVSIYDYSLKSLRSQVALVSQQVTLFNDTIANNIAYAYPGEATREQIIQAATLAHAMEFIEQLPEGLDTQVGENGVLLSGGQRQRIAIARAMLRDAPVLILDEATSALDTESEKAIQQGLDNLRQNRTSVVIAHRLSTIESADQILVVDQGRIVERGTHKSLLELGGMYAKLYQMQFGS</sequence>
<protein>
    <recommendedName>
        <fullName evidence="1">ATP-dependent lipid A-core flippase</fullName>
        <ecNumber evidence="1">7.5.2.6</ecNumber>
    </recommendedName>
    <alternativeName>
        <fullName evidence="1">Lipid A export ATP-binding/permease protein MsbA</fullName>
    </alternativeName>
</protein>